<organism>
    <name type="scientific">Thermus thermophilus (strain ATCC BAA-163 / DSM 7039 / HB27)</name>
    <dbReference type="NCBI Taxonomy" id="262724"/>
    <lineage>
        <taxon>Bacteria</taxon>
        <taxon>Thermotogati</taxon>
        <taxon>Deinococcota</taxon>
        <taxon>Deinococci</taxon>
        <taxon>Thermales</taxon>
        <taxon>Thermaceae</taxon>
        <taxon>Thermus</taxon>
    </lineage>
</organism>
<gene>
    <name evidence="1" type="primary">argH</name>
    <name type="ordered locus">TT_C1702</name>
</gene>
<proteinExistence type="inferred from homology"/>
<evidence type="ECO:0000255" key="1">
    <source>
        <dbReference type="HAMAP-Rule" id="MF_00006"/>
    </source>
</evidence>
<feature type="chain" id="PRO_0000137843" description="Argininosuccinate lyase">
    <location>
        <begin position="1"/>
        <end position="462"/>
    </location>
</feature>
<protein>
    <recommendedName>
        <fullName evidence="1">Argininosuccinate lyase</fullName>
        <shortName evidence="1">ASAL</shortName>
        <ecNumber evidence="1">4.3.2.1</ecNumber>
    </recommendedName>
    <alternativeName>
        <fullName evidence="1">Arginosuccinase</fullName>
    </alternativeName>
</protein>
<reference key="1">
    <citation type="journal article" date="2004" name="Nat. Biotechnol.">
        <title>The genome sequence of the extreme thermophile Thermus thermophilus.</title>
        <authorList>
            <person name="Henne A."/>
            <person name="Brueggemann H."/>
            <person name="Raasch C."/>
            <person name="Wiezer A."/>
            <person name="Hartsch T."/>
            <person name="Liesegang H."/>
            <person name="Johann A."/>
            <person name="Lienard T."/>
            <person name="Gohl O."/>
            <person name="Martinez-Arias R."/>
            <person name="Jacobi C."/>
            <person name="Starkuviene V."/>
            <person name="Schlenczeck S."/>
            <person name="Dencker S."/>
            <person name="Huber R."/>
            <person name="Klenk H.-P."/>
            <person name="Kramer W."/>
            <person name="Merkl R."/>
            <person name="Gottschalk G."/>
            <person name="Fritz H.-J."/>
        </authorList>
    </citation>
    <scope>NUCLEOTIDE SEQUENCE [LARGE SCALE GENOMIC DNA]</scope>
    <source>
        <strain>ATCC BAA-163 / DSM 7039 / HB27</strain>
    </source>
</reference>
<comment type="catalytic activity">
    <reaction evidence="1">
        <text>2-(N(omega)-L-arginino)succinate = fumarate + L-arginine</text>
        <dbReference type="Rhea" id="RHEA:24020"/>
        <dbReference type="ChEBI" id="CHEBI:29806"/>
        <dbReference type="ChEBI" id="CHEBI:32682"/>
        <dbReference type="ChEBI" id="CHEBI:57472"/>
        <dbReference type="EC" id="4.3.2.1"/>
    </reaction>
</comment>
<comment type="pathway">
    <text evidence="1">Amino-acid biosynthesis; L-arginine biosynthesis; L-arginine from L-ornithine and carbamoyl phosphate: step 3/3.</text>
</comment>
<comment type="subcellular location">
    <subcellularLocation>
        <location evidence="1">Cytoplasm</location>
    </subcellularLocation>
</comment>
<comment type="similarity">
    <text evidence="1">Belongs to the lyase 1 family. Argininosuccinate lyase subfamily.</text>
</comment>
<dbReference type="EC" id="4.3.2.1" evidence="1"/>
<dbReference type="EMBL" id="AE017221">
    <property type="protein sequence ID" value="AAS82044.1"/>
    <property type="molecule type" value="Genomic_DNA"/>
</dbReference>
<dbReference type="RefSeq" id="WP_011174065.1">
    <property type="nucleotide sequence ID" value="NC_005835.1"/>
</dbReference>
<dbReference type="SMR" id="Q72GZ4"/>
<dbReference type="KEGG" id="tth:TT_C1702"/>
<dbReference type="eggNOG" id="COG0165">
    <property type="taxonomic scope" value="Bacteria"/>
</dbReference>
<dbReference type="HOGENOM" id="CLU_027272_2_3_0"/>
<dbReference type="OrthoDB" id="9769623at2"/>
<dbReference type="UniPathway" id="UPA00068">
    <property type="reaction ID" value="UER00114"/>
</dbReference>
<dbReference type="Proteomes" id="UP000000592">
    <property type="component" value="Chromosome"/>
</dbReference>
<dbReference type="GO" id="GO:0005829">
    <property type="term" value="C:cytosol"/>
    <property type="evidence" value="ECO:0007669"/>
    <property type="project" value="TreeGrafter"/>
</dbReference>
<dbReference type="GO" id="GO:0004056">
    <property type="term" value="F:argininosuccinate lyase activity"/>
    <property type="evidence" value="ECO:0007669"/>
    <property type="project" value="UniProtKB-UniRule"/>
</dbReference>
<dbReference type="GO" id="GO:0042450">
    <property type="term" value="P:arginine biosynthetic process via ornithine"/>
    <property type="evidence" value="ECO:0007669"/>
    <property type="project" value="InterPro"/>
</dbReference>
<dbReference type="GO" id="GO:0006526">
    <property type="term" value="P:L-arginine biosynthetic process"/>
    <property type="evidence" value="ECO:0007669"/>
    <property type="project" value="UniProtKB-UniRule"/>
</dbReference>
<dbReference type="CDD" id="cd01359">
    <property type="entry name" value="Argininosuccinate_lyase"/>
    <property type="match status" value="1"/>
</dbReference>
<dbReference type="FunFam" id="1.10.275.10:FF:000002">
    <property type="entry name" value="Argininosuccinate lyase"/>
    <property type="match status" value="1"/>
</dbReference>
<dbReference type="FunFam" id="1.10.40.30:FF:000001">
    <property type="entry name" value="Argininosuccinate lyase"/>
    <property type="match status" value="1"/>
</dbReference>
<dbReference type="FunFam" id="1.20.200.10:FF:000006">
    <property type="entry name" value="Argininosuccinate lyase"/>
    <property type="match status" value="1"/>
</dbReference>
<dbReference type="Gene3D" id="1.10.40.30">
    <property type="entry name" value="Fumarase/aspartase (C-terminal domain)"/>
    <property type="match status" value="1"/>
</dbReference>
<dbReference type="Gene3D" id="1.20.200.10">
    <property type="entry name" value="Fumarase/aspartase (Central domain)"/>
    <property type="match status" value="1"/>
</dbReference>
<dbReference type="Gene3D" id="1.10.275.10">
    <property type="entry name" value="Fumarase/aspartase (N-terminal domain)"/>
    <property type="match status" value="1"/>
</dbReference>
<dbReference type="HAMAP" id="MF_00006">
    <property type="entry name" value="Arg_succ_lyase"/>
    <property type="match status" value="1"/>
</dbReference>
<dbReference type="InterPro" id="IPR029419">
    <property type="entry name" value="Arg_succ_lyase_C"/>
</dbReference>
<dbReference type="InterPro" id="IPR009049">
    <property type="entry name" value="Argininosuccinate_lyase"/>
</dbReference>
<dbReference type="InterPro" id="IPR024083">
    <property type="entry name" value="Fumarase/histidase_N"/>
</dbReference>
<dbReference type="InterPro" id="IPR020557">
    <property type="entry name" value="Fumarate_lyase_CS"/>
</dbReference>
<dbReference type="InterPro" id="IPR000362">
    <property type="entry name" value="Fumarate_lyase_fam"/>
</dbReference>
<dbReference type="InterPro" id="IPR022761">
    <property type="entry name" value="Fumarate_lyase_N"/>
</dbReference>
<dbReference type="InterPro" id="IPR008948">
    <property type="entry name" value="L-Aspartase-like"/>
</dbReference>
<dbReference type="NCBIfam" id="TIGR00838">
    <property type="entry name" value="argH"/>
    <property type="match status" value="1"/>
</dbReference>
<dbReference type="PANTHER" id="PTHR43814">
    <property type="entry name" value="ARGININOSUCCINATE LYASE"/>
    <property type="match status" value="1"/>
</dbReference>
<dbReference type="PANTHER" id="PTHR43814:SF1">
    <property type="entry name" value="ARGININOSUCCINATE LYASE"/>
    <property type="match status" value="1"/>
</dbReference>
<dbReference type="Pfam" id="PF14698">
    <property type="entry name" value="ASL_C2"/>
    <property type="match status" value="1"/>
</dbReference>
<dbReference type="Pfam" id="PF00206">
    <property type="entry name" value="Lyase_1"/>
    <property type="match status" value="1"/>
</dbReference>
<dbReference type="PRINTS" id="PR00145">
    <property type="entry name" value="ARGSUCLYASE"/>
</dbReference>
<dbReference type="PRINTS" id="PR00149">
    <property type="entry name" value="FUMRATELYASE"/>
</dbReference>
<dbReference type="SUPFAM" id="SSF48557">
    <property type="entry name" value="L-aspartase-like"/>
    <property type="match status" value="1"/>
</dbReference>
<dbReference type="PROSITE" id="PS00163">
    <property type="entry name" value="FUMARATE_LYASES"/>
    <property type="match status" value="1"/>
</dbReference>
<sequence>MAHRTWGGRFGEGPDALAARFNASLAFDRALWREDLWQNRVHARMLHAVGLLSAEELEAILKGLDRIEEEIEAGTFPWREELEDVHMNLEARLTELVGPPGGKLHTARSRNDQVATDLRLYLRGAIDELLALLLALRRVLVREAEKHLDPLYVLPGYTHLQRAQPVLLAHWFLAYYEMLKRDAGRLEDAKERLNESPLGAAALAGTGFPIDRHFTARELGFKAPMRNSLDAVASRDFALEVLSALNIGMLHLSRMAEELILYSTEEFGFVEVPDAFATGSSIMPQKKNPDILELIRAKAGRVLGALVGLSAVVKGLPLAYNKDLQEDKEPLLDALATYRDSLRLLAALLPGLKWRRERMWRAAEGGYTLATELADYLAEKGLPFREAHHVVGRLVRRLVEEGRALKDLTLEELQAHHPLFAEDALPLLRLETAIHRRRSYGGTAPEAVRERLEEAKKEVGLD</sequence>
<name>ARLY_THET2</name>
<keyword id="KW-0028">Amino-acid biosynthesis</keyword>
<keyword id="KW-0055">Arginine biosynthesis</keyword>
<keyword id="KW-0963">Cytoplasm</keyword>
<keyword id="KW-0456">Lyase</keyword>
<accession>Q72GZ4</accession>